<protein>
    <recommendedName>
        <fullName evidence="3">Peptide HSTX-II</fullName>
    </recommendedName>
</protein>
<accession>P0DUG5</accession>
<dbReference type="GO" id="GO:0005576">
    <property type="term" value="C:extracellular region"/>
    <property type="evidence" value="ECO:0007669"/>
    <property type="project" value="UniProtKB-SubCell"/>
</dbReference>
<comment type="function">
    <text evidence="1">Leech salivary gland peptide with unknown function.</text>
</comment>
<comment type="subcellular location">
    <subcellularLocation>
        <location evidence="1">Secreted</location>
    </subcellularLocation>
</comment>
<comment type="tissue specificity">
    <text evidence="1">Expressed in salivary glands. Highly expressed in the head, body and tail with a 2-3-fold higher expression in the head.</text>
</comment>
<comment type="miscellaneous">
    <text evidence="1">Does not show effect on voltage-gated calcium channels, potassium channels, and tetrodotoxin-sensitive sodium channels. Does not show activity on Nav1.7/SCN9A, and shows very weak activity on cation channel TRPA1.</text>
</comment>
<comment type="similarity">
    <text evidence="4">Belongs to the annelide toxin family.</text>
</comment>
<evidence type="ECO:0000250" key="1">
    <source>
        <dbReference type="UniProtKB" id="A0A2L1DGG0"/>
    </source>
</evidence>
<evidence type="ECO:0000255" key="2"/>
<evidence type="ECO:0000303" key="3">
    <source>
    </source>
</evidence>
<evidence type="ECO:0000305" key="4"/>
<sequence>MKTLLVFLLLAILVAVFIGNAQVEACKNHTDCLSGICLKGFCMPAFG</sequence>
<reference key="1">
    <citation type="journal article" date="2018" name="Front. Pharmacol.">
        <title>Novel sodium channel inhibitor from leeches.</title>
        <authorList>
            <person name="Wang G."/>
            <person name="Long C."/>
            <person name="Liu W."/>
            <person name="Xu C."/>
            <person name="Zhang M."/>
            <person name="Li Q."/>
            <person name="Lu Q."/>
            <person name="Meng P."/>
            <person name="Li D."/>
            <person name="Rong M."/>
            <person name="Sun Z."/>
            <person name="Luo X."/>
            <person name="Lai R."/>
        </authorList>
    </citation>
    <scope>NUCLEOTIDE SEQUENCE [MRNA]</scope>
    <source>
        <tissue>Salivary gland</tissue>
    </source>
</reference>
<keyword id="KW-0027">Amidation</keyword>
<keyword id="KW-1015">Disulfide bond</keyword>
<keyword id="KW-0964">Secreted</keyword>
<keyword id="KW-0732">Signal</keyword>
<proteinExistence type="inferred from homology"/>
<organism>
    <name type="scientific">Haemadipsa sylvestris</name>
    <name type="common">Indian leech</name>
    <dbReference type="NCBI Taxonomy" id="13555"/>
    <lineage>
        <taxon>Eukaryota</taxon>
        <taxon>Metazoa</taxon>
        <taxon>Spiralia</taxon>
        <taxon>Lophotrochozoa</taxon>
        <taxon>Annelida</taxon>
        <taxon>Clitellata</taxon>
        <taxon>Hirudinea</taxon>
        <taxon>Hirudinida</taxon>
        <taxon>Hirudiniformes</taxon>
        <taxon>Haemadipsidae</taxon>
        <taxon>Haemadipsa</taxon>
    </lineage>
</organism>
<feature type="signal peptide" evidence="2">
    <location>
        <begin position="1"/>
        <end position="21"/>
    </location>
</feature>
<feature type="propeptide" id="PRO_0000452216" evidence="1">
    <location>
        <begin position="22"/>
        <end position="27"/>
    </location>
</feature>
<feature type="peptide" id="PRO_0000452217" description="Peptide HSTX-II" evidence="1">
    <location>
        <begin position="28"/>
        <end position="46"/>
    </location>
</feature>
<feature type="modified residue" description="Phenylalanine amide" evidence="1">
    <location>
        <position position="46"/>
    </location>
</feature>
<feature type="disulfide bond" evidence="1">
    <location>
        <begin position="26"/>
        <end position="37"/>
    </location>
</feature>
<feature type="disulfide bond" evidence="1">
    <location>
        <begin position="32"/>
        <end position="42"/>
    </location>
</feature>
<name>HSTX2_HAESL</name>